<accession>B2K6T9</accession>
<name>EX7S_YERPB</name>
<sequence length="84" mass="9307">MPKKAASPEIKAASFETSLSELEQIVTRLESGELPLEDALNEFERGVQLARQGQQTLLQAEQRVQILLSDDVDAPLKPFTPDTE</sequence>
<feature type="chain" id="PRO_1000119972" description="Exodeoxyribonuclease 7 small subunit">
    <location>
        <begin position="1"/>
        <end position="84"/>
    </location>
</feature>
<reference key="1">
    <citation type="submission" date="2008-04" db="EMBL/GenBank/DDBJ databases">
        <title>Complete sequence of Yersinia pseudotuberculosis PB1/+.</title>
        <authorList>
            <person name="Copeland A."/>
            <person name="Lucas S."/>
            <person name="Lapidus A."/>
            <person name="Glavina del Rio T."/>
            <person name="Dalin E."/>
            <person name="Tice H."/>
            <person name="Bruce D."/>
            <person name="Goodwin L."/>
            <person name="Pitluck S."/>
            <person name="Munk A.C."/>
            <person name="Brettin T."/>
            <person name="Detter J.C."/>
            <person name="Han C."/>
            <person name="Tapia R."/>
            <person name="Schmutz J."/>
            <person name="Larimer F."/>
            <person name="Land M."/>
            <person name="Hauser L."/>
            <person name="Challacombe J.F."/>
            <person name="Green L."/>
            <person name="Lindler L.E."/>
            <person name="Nikolich M.P."/>
            <person name="Richardson P."/>
        </authorList>
    </citation>
    <scope>NUCLEOTIDE SEQUENCE [LARGE SCALE GENOMIC DNA]</scope>
    <source>
        <strain>PB1/+</strain>
    </source>
</reference>
<keyword id="KW-0963">Cytoplasm</keyword>
<keyword id="KW-0269">Exonuclease</keyword>
<keyword id="KW-0378">Hydrolase</keyword>
<keyword id="KW-0540">Nuclease</keyword>
<evidence type="ECO:0000255" key="1">
    <source>
        <dbReference type="HAMAP-Rule" id="MF_00337"/>
    </source>
</evidence>
<proteinExistence type="inferred from homology"/>
<organism>
    <name type="scientific">Yersinia pseudotuberculosis serotype IB (strain PB1/+)</name>
    <dbReference type="NCBI Taxonomy" id="502801"/>
    <lineage>
        <taxon>Bacteria</taxon>
        <taxon>Pseudomonadati</taxon>
        <taxon>Pseudomonadota</taxon>
        <taxon>Gammaproteobacteria</taxon>
        <taxon>Enterobacterales</taxon>
        <taxon>Yersiniaceae</taxon>
        <taxon>Yersinia</taxon>
    </lineage>
</organism>
<protein>
    <recommendedName>
        <fullName evidence="1">Exodeoxyribonuclease 7 small subunit</fullName>
        <ecNumber evidence="1">3.1.11.6</ecNumber>
    </recommendedName>
    <alternativeName>
        <fullName evidence="1">Exodeoxyribonuclease VII small subunit</fullName>
        <shortName evidence="1">Exonuclease VII small subunit</shortName>
    </alternativeName>
</protein>
<gene>
    <name evidence="1" type="primary">xseB</name>
    <name type="ordered locus">YPTS_0982</name>
</gene>
<dbReference type="EC" id="3.1.11.6" evidence="1"/>
<dbReference type="EMBL" id="CP001048">
    <property type="protein sequence ID" value="ACC87963.1"/>
    <property type="molecule type" value="Genomic_DNA"/>
</dbReference>
<dbReference type="RefSeq" id="WP_002208660.1">
    <property type="nucleotide sequence ID" value="NZ_CP009780.1"/>
</dbReference>
<dbReference type="SMR" id="B2K6T9"/>
<dbReference type="GeneID" id="57975538"/>
<dbReference type="KEGG" id="ypb:YPTS_0982"/>
<dbReference type="PATRIC" id="fig|502801.10.peg.323"/>
<dbReference type="GO" id="GO:0005829">
    <property type="term" value="C:cytosol"/>
    <property type="evidence" value="ECO:0007669"/>
    <property type="project" value="TreeGrafter"/>
</dbReference>
<dbReference type="GO" id="GO:0009318">
    <property type="term" value="C:exodeoxyribonuclease VII complex"/>
    <property type="evidence" value="ECO:0007669"/>
    <property type="project" value="InterPro"/>
</dbReference>
<dbReference type="GO" id="GO:0008855">
    <property type="term" value="F:exodeoxyribonuclease VII activity"/>
    <property type="evidence" value="ECO:0007669"/>
    <property type="project" value="UniProtKB-UniRule"/>
</dbReference>
<dbReference type="GO" id="GO:0006308">
    <property type="term" value="P:DNA catabolic process"/>
    <property type="evidence" value="ECO:0007669"/>
    <property type="project" value="UniProtKB-UniRule"/>
</dbReference>
<dbReference type="FunFam" id="1.10.287.1040:FF:000001">
    <property type="entry name" value="Exodeoxyribonuclease 7 small subunit"/>
    <property type="match status" value="1"/>
</dbReference>
<dbReference type="Gene3D" id="1.10.287.1040">
    <property type="entry name" value="Exonuclease VII, small subunit"/>
    <property type="match status" value="1"/>
</dbReference>
<dbReference type="HAMAP" id="MF_00337">
    <property type="entry name" value="Exonuc_7_S"/>
    <property type="match status" value="1"/>
</dbReference>
<dbReference type="InterPro" id="IPR003761">
    <property type="entry name" value="Exonuc_VII_S"/>
</dbReference>
<dbReference type="InterPro" id="IPR037004">
    <property type="entry name" value="Exonuc_VII_ssu_sf"/>
</dbReference>
<dbReference type="NCBIfam" id="NF002137">
    <property type="entry name" value="PRK00977.1-1"/>
    <property type="match status" value="1"/>
</dbReference>
<dbReference type="NCBIfam" id="NF002140">
    <property type="entry name" value="PRK00977.1-4"/>
    <property type="match status" value="1"/>
</dbReference>
<dbReference type="NCBIfam" id="TIGR01280">
    <property type="entry name" value="xseB"/>
    <property type="match status" value="1"/>
</dbReference>
<dbReference type="PANTHER" id="PTHR34137">
    <property type="entry name" value="EXODEOXYRIBONUCLEASE 7 SMALL SUBUNIT"/>
    <property type="match status" value="1"/>
</dbReference>
<dbReference type="PANTHER" id="PTHR34137:SF1">
    <property type="entry name" value="EXODEOXYRIBONUCLEASE 7 SMALL SUBUNIT"/>
    <property type="match status" value="1"/>
</dbReference>
<dbReference type="Pfam" id="PF02609">
    <property type="entry name" value="Exonuc_VII_S"/>
    <property type="match status" value="1"/>
</dbReference>
<dbReference type="PIRSF" id="PIRSF006488">
    <property type="entry name" value="Exonuc_VII_S"/>
    <property type="match status" value="1"/>
</dbReference>
<dbReference type="SUPFAM" id="SSF116842">
    <property type="entry name" value="XseB-like"/>
    <property type="match status" value="1"/>
</dbReference>
<comment type="function">
    <text evidence="1">Bidirectionally degrades single-stranded DNA into large acid-insoluble oligonucleotides, which are then degraded further into small acid-soluble oligonucleotides.</text>
</comment>
<comment type="catalytic activity">
    <reaction evidence="1">
        <text>Exonucleolytic cleavage in either 5'- to 3'- or 3'- to 5'-direction to yield nucleoside 5'-phosphates.</text>
        <dbReference type="EC" id="3.1.11.6"/>
    </reaction>
</comment>
<comment type="subunit">
    <text evidence="1">Heterooligomer composed of large and small subunits.</text>
</comment>
<comment type="subcellular location">
    <subcellularLocation>
        <location evidence="1">Cytoplasm</location>
    </subcellularLocation>
</comment>
<comment type="similarity">
    <text evidence="1">Belongs to the XseB family.</text>
</comment>